<keyword id="KW-0020">Allergen</keyword>
<keyword id="KW-0903">Direct protein sequencing</keyword>
<keyword id="KW-1015">Disulfide bond</keyword>
<keyword id="KW-0964">Secreted</keyword>
<feature type="chain" id="PRO_0000211543" description="Venom allergen 5">
    <location>
        <begin position="1"/>
        <end position="202"/>
    </location>
</feature>
<feature type="domain" description="SCP">
    <location>
        <begin position="46"/>
        <end position="187"/>
    </location>
</feature>
<feature type="disulfide bond" evidence="1">
    <location>
        <begin position="4"/>
        <end position="16"/>
    </location>
</feature>
<feature type="disulfide bond" evidence="1">
    <location>
        <begin position="8"/>
        <end position="101"/>
    </location>
</feature>
<feature type="disulfide bond" evidence="1">
    <location>
        <begin position="26"/>
        <end position="94"/>
    </location>
</feature>
<feature type="disulfide bond" evidence="1">
    <location>
        <begin position="168"/>
        <end position="185"/>
    </location>
</feature>
<name>VA5_VESMA</name>
<sequence length="202" mass="22547">NNYCKIKCRSGIHTLCKFGISTKPNCGKNVVKASGLTKAEKLEILKQHNEFRQKVARGLETRGKPGPQPPAKSMNTLVWNDELAQIAQVWAGQCDYGHDVCRNTAKYSVGQNIAENGSTAASFASVSNMVQMWADEVKNYQYGSTKNKLIEVGHYTQMVWAKTKEIGCGSIKYIENGWHRHYLVCNYGPAGNIGNEPIYERK</sequence>
<proteinExistence type="evidence at protein level"/>
<protein>
    <recommendedName>
        <fullName>Venom allergen 5</fullName>
    </recommendedName>
    <alternativeName>
        <fullName>Antigen 5</fullName>
        <shortName>Ag5</shortName>
    </alternativeName>
    <alternativeName>
        <fullName>Cysteine-rich venom protein</fullName>
        <shortName>CRVP</shortName>
    </alternativeName>
    <allergenName>Vesp m 5</allergenName>
</protein>
<comment type="subcellular location">
    <subcellularLocation>
        <location>Secreted</location>
    </subcellularLocation>
</comment>
<comment type="tissue specificity">
    <text>Expressed by the venom gland.</text>
</comment>
<comment type="allergen">
    <text>Causes an allergic reaction in human.</text>
</comment>
<comment type="similarity">
    <text evidence="2">Belongs to the CRISP family. Venom allergen 5-like subfamily.</text>
</comment>
<dbReference type="SMR" id="P81657"/>
<dbReference type="Allergome" id="3526">
    <property type="allergen name" value="Vesp m 5.0101"/>
</dbReference>
<dbReference type="Allergome" id="678">
    <property type="allergen name" value="Vesp m 5"/>
</dbReference>
<dbReference type="GO" id="GO:0005576">
    <property type="term" value="C:extracellular region"/>
    <property type="evidence" value="ECO:0007669"/>
    <property type="project" value="UniProtKB-SubCell"/>
</dbReference>
<dbReference type="CDD" id="cd05380">
    <property type="entry name" value="CAP_euk"/>
    <property type="match status" value="1"/>
</dbReference>
<dbReference type="Gene3D" id="3.40.33.10">
    <property type="entry name" value="CAP"/>
    <property type="match status" value="1"/>
</dbReference>
<dbReference type="InterPro" id="IPR018244">
    <property type="entry name" value="Allrgn_V5/Tpx1_CS"/>
</dbReference>
<dbReference type="InterPro" id="IPR014044">
    <property type="entry name" value="CAP_dom"/>
</dbReference>
<dbReference type="InterPro" id="IPR035940">
    <property type="entry name" value="CAP_sf"/>
</dbReference>
<dbReference type="InterPro" id="IPR001283">
    <property type="entry name" value="CRISP-related"/>
</dbReference>
<dbReference type="InterPro" id="IPR002413">
    <property type="entry name" value="V5_allergen-like"/>
</dbReference>
<dbReference type="PANTHER" id="PTHR10334">
    <property type="entry name" value="CYSTEINE-RICH SECRETORY PROTEIN-RELATED"/>
    <property type="match status" value="1"/>
</dbReference>
<dbReference type="Pfam" id="PF00188">
    <property type="entry name" value="CAP"/>
    <property type="match status" value="1"/>
</dbReference>
<dbReference type="PRINTS" id="PR00838">
    <property type="entry name" value="V5ALLERGEN"/>
</dbReference>
<dbReference type="PRINTS" id="PR00837">
    <property type="entry name" value="V5TPXLIKE"/>
</dbReference>
<dbReference type="SMART" id="SM00198">
    <property type="entry name" value="SCP"/>
    <property type="match status" value="1"/>
</dbReference>
<dbReference type="SUPFAM" id="SSF55797">
    <property type="entry name" value="PR-1-like"/>
    <property type="match status" value="1"/>
</dbReference>
<dbReference type="PROSITE" id="PS01009">
    <property type="entry name" value="CRISP_1"/>
    <property type="match status" value="1"/>
</dbReference>
<dbReference type="PROSITE" id="PS01010">
    <property type="entry name" value="CRISP_2"/>
    <property type="match status" value="1"/>
</dbReference>
<accession>P81657</accession>
<evidence type="ECO:0000250" key="1"/>
<evidence type="ECO:0000305" key="2"/>
<reference key="1">
    <citation type="submission" date="1998-02" db="UniProtKB">
        <authorList>
            <person name="Hoffman D.R."/>
            <person name="Schmidt J.O."/>
        </authorList>
    </citation>
    <scope>PROTEIN SEQUENCE</scope>
    <source>
        <tissue>Venom</tissue>
    </source>
</reference>
<organism>
    <name type="scientific">Vespa mandarinia</name>
    <name type="common">Asian giant hornet</name>
    <dbReference type="NCBI Taxonomy" id="7446"/>
    <lineage>
        <taxon>Eukaryota</taxon>
        <taxon>Metazoa</taxon>
        <taxon>Ecdysozoa</taxon>
        <taxon>Arthropoda</taxon>
        <taxon>Hexapoda</taxon>
        <taxon>Insecta</taxon>
        <taxon>Pterygota</taxon>
        <taxon>Neoptera</taxon>
        <taxon>Endopterygota</taxon>
        <taxon>Hymenoptera</taxon>
        <taxon>Apocrita</taxon>
        <taxon>Aculeata</taxon>
        <taxon>Vespoidea</taxon>
        <taxon>Vespidae</taxon>
        <taxon>Vespinae</taxon>
        <taxon>Vespa</taxon>
    </lineage>
</organism>